<comment type="function">
    <text evidence="1">Exhibits antimicrobial activity against Gram-positive and Gram-negative bacteria.</text>
</comment>
<comment type="subcellular location">
    <subcellularLocation>
        <location evidence="1">Secreted</location>
    </subcellularLocation>
</comment>
<comment type="similarity">
    <text evidence="2">Belongs to the beta-defensin family.</text>
</comment>
<dbReference type="EMBL" id="DQ012056">
    <property type="protein sequence ID" value="AAY59788.1"/>
    <property type="molecule type" value="mRNA"/>
</dbReference>
<dbReference type="EMBL" id="AM410103">
    <property type="protein sequence ID" value="CAL68918.1"/>
    <property type="molecule type" value="Genomic_DNA"/>
</dbReference>
<dbReference type="EMBL" id="AY033883">
    <property type="protein sequence ID" value="AAK61549.1"/>
    <property type="molecule type" value="mRNA"/>
</dbReference>
<dbReference type="EMBL" id="AY831729">
    <property type="protein sequence ID" value="AAW32910.1"/>
    <property type="molecule type" value="Genomic_DNA"/>
</dbReference>
<dbReference type="RefSeq" id="NP_001123222.1">
    <property type="nucleotide sequence ID" value="NM_001129750.1"/>
</dbReference>
<dbReference type="SMR" id="Q95JD2"/>
<dbReference type="FunCoup" id="Q95JD2">
    <property type="interactions" value="183"/>
</dbReference>
<dbReference type="STRING" id="9598.ENSPTRP00000034200"/>
<dbReference type="PaxDb" id="9598-ENSPTRP00000034200"/>
<dbReference type="Ensembl" id="ENSPTRT00000037006.4">
    <property type="protein sequence ID" value="ENSPTRP00000034200.3"/>
    <property type="gene ID" value="ENSPTRG00000019964.4"/>
</dbReference>
<dbReference type="GeneID" id="450106"/>
<dbReference type="KEGG" id="ptr:450106"/>
<dbReference type="CTD" id="414325"/>
<dbReference type="eggNOG" id="ENOG502TF5P">
    <property type="taxonomic scope" value="Eukaryota"/>
</dbReference>
<dbReference type="GeneTree" id="ENSGT00530000064280"/>
<dbReference type="HOGENOM" id="CLU_189296_2_0_1"/>
<dbReference type="InParanoid" id="Q95JD2"/>
<dbReference type="OMA" id="RETQIGH"/>
<dbReference type="OrthoDB" id="9008at9604"/>
<dbReference type="Proteomes" id="UP000002277">
    <property type="component" value="Unplaced"/>
</dbReference>
<dbReference type="Bgee" id="ENSPTRG00000019964">
    <property type="expression patterns" value="Expressed in fibroblast and 2 other cell types or tissues"/>
</dbReference>
<dbReference type="GO" id="GO:0005615">
    <property type="term" value="C:extracellular space"/>
    <property type="evidence" value="ECO:0000318"/>
    <property type="project" value="GO_Central"/>
</dbReference>
<dbReference type="GO" id="GO:0031731">
    <property type="term" value="F:CCR6 chemokine receptor binding"/>
    <property type="evidence" value="ECO:0000318"/>
    <property type="project" value="GO_Central"/>
</dbReference>
<dbReference type="GO" id="GO:0042056">
    <property type="term" value="F:chemoattractant activity"/>
    <property type="evidence" value="ECO:0000318"/>
    <property type="project" value="GO_Central"/>
</dbReference>
<dbReference type="GO" id="GO:0060326">
    <property type="term" value="P:cell chemotaxis"/>
    <property type="evidence" value="ECO:0000318"/>
    <property type="project" value="GO_Central"/>
</dbReference>
<dbReference type="GO" id="GO:0042742">
    <property type="term" value="P:defense response to bacterium"/>
    <property type="evidence" value="ECO:0000318"/>
    <property type="project" value="GO_Central"/>
</dbReference>
<dbReference type="FunFam" id="3.10.360.10:FF:000001">
    <property type="entry name" value="Beta-defensin 1"/>
    <property type="match status" value="1"/>
</dbReference>
<dbReference type="Gene3D" id="3.10.360.10">
    <property type="entry name" value="Antimicrobial Peptide, Beta-defensin 2, Chain A"/>
    <property type="match status" value="1"/>
</dbReference>
<dbReference type="InterPro" id="IPR001855">
    <property type="entry name" value="Defensin_beta-like"/>
</dbReference>
<dbReference type="PANTHER" id="PTHR20515">
    <property type="entry name" value="BETA-DEFENSIN"/>
    <property type="match status" value="1"/>
</dbReference>
<dbReference type="PANTHER" id="PTHR20515:SF0">
    <property type="entry name" value="BETA-DEFENSIN 103"/>
    <property type="match status" value="1"/>
</dbReference>
<dbReference type="Pfam" id="PF00711">
    <property type="entry name" value="Defensin_beta"/>
    <property type="match status" value="1"/>
</dbReference>
<dbReference type="SUPFAM" id="SSF57392">
    <property type="entry name" value="Defensin-like"/>
    <property type="match status" value="1"/>
</dbReference>
<reference key="1">
    <citation type="journal article" date="2005" name="Physiol. Genomics">
        <title>Cross-species analysis of the mammalian beta-defensin gene family: presence of syntenic gene clusters and preferential expression in the male reproductive tract.</title>
        <authorList>
            <person name="Patil A.A."/>
            <person name="Cai Y."/>
            <person name="Sang Y."/>
            <person name="Blecha F."/>
            <person name="Zhang G."/>
        </authorList>
    </citation>
    <scope>NUCLEOTIDE SEQUENCE [MRNA]</scope>
</reference>
<reference key="2">
    <citation type="submission" date="2006-11" db="EMBL/GenBank/DDBJ databases">
        <title>Evolution and sequence variation of human beta-defensin genes.</title>
        <authorList>
            <person name="Hollox E.J."/>
            <person name="Armour J.A.L."/>
        </authorList>
    </citation>
    <scope>NUCLEOTIDE SEQUENCE [GENOMIC DNA]</scope>
</reference>
<reference key="3">
    <citation type="submission" date="2001-05" db="EMBL/GenBank/DDBJ databases">
        <title>Expression of chimpanzee (Pan troglodytes) beta-defensin-3.</title>
        <authorList>
            <person name="Duits L.A."/>
            <person name="Langermans J.A.M."/>
            <person name="Ravensbergen B."/>
            <person name="Paltansing S."/>
            <person name="Vervenne R.A.W."/>
            <person name="Hiemstra P.S."/>
            <person name="Thomas A.W."/>
            <person name="Nibbering P.H."/>
        </authorList>
    </citation>
    <scope>NUCLEOTIDE SEQUENCE [MRNA] OF 1-64</scope>
    <source>
        <tissue>Skin</tissue>
    </source>
</reference>
<reference key="4">
    <citation type="journal article" date="2005" name="BMC Evol. Biol.">
        <title>The complexity of selection at the major primate beta-defensin locus.</title>
        <authorList>
            <person name="Semple C.A.M."/>
            <person name="Maxwell A."/>
            <person name="Gautier P."/>
            <person name="Kilanowski F.M."/>
            <person name="Eastwood H."/>
            <person name="Barran P.E."/>
            <person name="Dorin J.R."/>
        </authorList>
    </citation>
    <scope>NUCLEOTIDE SEQUENCE [GENOMIC DNA] OF 21-67</scope>
</reference>
<sequence>MRIHYLLFALLFLFLVPVPGHGGIINTLQKYYCRVRGGRCAVLTCLPKEEQIGKCSTRGRKCCRRKK</sequence>
<gene>
    <name type="primary">DEFB103A</name>
    <name type="synonym">DEFB103</name>
    <name type="synonym">DEFB3</name>
</gene>
<accession>Q95JD2</accession>
<accession>A4H1Z8</accession>
<accession>Q30KM2</accession>
<accession>Q5IAC2</accession>
<protein>
    <recommendedName>
        <fullName>Beta-defensin 103A</fullName>
    </recommendedName>
    <alternativeName>
        <fullName>Beta-defensin 3</fullName>
        <shortName>BD-3</shortName>
        <shortName>DEFB-3</shortName>
        <shortName>cBD-3</shortName>
    </alternativeName>
    <alternativeName>
        <fullName>Defensin, beta 103</fullName>
    </alternativeName>
    <alternativeName>
        <fullName>Defensin, beta 103A</fullName>
    </alternativeName>
</protein>
<keyword id="KW-0044">Antibiotic</keyword>
<keyword id="KW-0929">Antimicrobial</keyword>
<keyword id="KW-0211">Defensin</keyword>
<keyword id="KW-1015">Disulfide bond</keyword>
<keyword id="KW-1185">Reference proteome</keyword>
<keyword id="KW-0964">Secreted</keyword>
<keyword id="KW-0732">Signal</keyword>
<feature type="signal peptide" evidence="1">
    <location>
        <begin position="1"/>
        <end position="22"/>
    </location>
</feature>
<feature type="peptide" id="PRO_0000006972" description="Beta-defensin 103A">
    <location>
        <begin position="23"/>
        <end position="67"/>
    </location>
</feature>
<feature type="disulfide bond" evidence="1">
    <location>
        <begin position="33"/>
        <end position="62"/>
    </location>
</feature>
<feature type="disulfide bond" evidence="1">
    <location>
        <begin position="40"/>
        <end position="55"/>
    </location>
</feature>
<feature type="disulfide bond" evidence="1">
    <location>
        <begin position="45"/>
        <end position="63"/>
    </location>
</feature>
<feature type="sequence conflict" description="In Ref. 2; CAL68918." evidence="2" ref="2">
    <original>R</original>
    <variation>Q</variation>
    <location>
        <position position="60"/>
    </location>
</feature>
<organism>
    <name type="scientific">Pan troglodytes</name>
    <name type="common">Chimpanzee</name>
    <dbReference type="NCBI Taxonomy" id="9598"/>
    <lineage>
        <taxon>Eukaryota</taxon>
        <taxon>Metazoa</taxon>
        <taxon>Chordata</taxon>
        <taxon>Craniata</taxon>
        <taxon>Vertebrata</taxon>
        <taxon>Euteleostomi</taxon>
        <taxon>Mammalia</taxon>
        <taxon>Eutheria</taxon>
        <taxon>Euarchontoglires</taxon>
        <taxon>Primates</taxon>
        <taxon>Haplorrhini</taxon>
        <taxon>Catarrhini</taxon>
        <taxon>Hominidae</taxon>
        <taxon>Pan</taxon>
    </lineage>
</organism>
<name>D103A_PANTR</name>
<proteinExistence type="inferred from homology"/>
<evidence type="ECO:0000250" key="1"/>
<evidence type="ECO:0000305" key="2"/>